<name>YMZC_BACSU</name>
<keyword id="KW-0002">3D-structure</keyword>
<keyword id="KW-1185">Reference proteome</keyword>
<keyword id="KW-0732">Signal</keyword>
<sequence length="90" mass="10509">MFESEAELRRIRIALVWIAVFLLFGACGNQDTIIETDNGNSDYETPQPTSFPLEHNHFGVMEDGYIKIYEYNESRNEVKLKKEYADDELE</sequence>
<proteinExistence type="evidence at protein level"/>
<dbReference type="EMBL" id="AL009126">
    <property type="protein sequence ID" value="CAB13619.1"/>
    <property type="molecule type" value="Genomic_DNA"/>
</dbReference>
<dbReference type="PIR" id="A69887">
    <property type="entry name" value="A69887"/>
</dbReference>
<dbReference type="RefSeq" id="NP_389617.1">
    <property type="nucleotide sequence ID" value="NC_000964.3"/>
</dbReference>
<dbReference type="RefSeq" id="WP_003245879.1">
    <property type="nucleotide sequence ID" value="NZ_OZ025638.1"/>
</dbReference>
<dbReference type="PDB" id="3KVP">
    <property type="method" value="X-ray"/>
    <property type="resolution" value="2.40 A"/>
    <property type="chains" value="A/B/C/D/E/F=28-90"/>
</dbReference>
<dbReference type="PDBsum" id="3KVP"/>
<dbReference type="SMR" id="O31797"/>
<dbReference type="FunCoup" id="O31797">
    <property type="interactions" value="1"/>
</dbReference>
<dbReference type="STRING" id="224308.BSU17350"/>
<dbReference type="PaxDb" id="224308-BSU17350"/>
<dbReference type="EnsemblBacteria" id="CAB13619">
    <property type="protein sequence ID" value="CAB13619"/>
    <property type="gene ID" value="BSU_17350"/>
</dbReference>
<dbReference type="GeneID" id="940085"/>
<dbReference type="KEGG" id="bsu:BSU17350"/>
<dbReference type="PATRIC" id="fig|224308.179.peg.1881"/>
<dbReference type="InParanoid" id="O31797"/>
<dbReference type="OrthoDB" id="2894807at2"/>
<dbReference type="BioCyc" id="BSUB:BSU17350-MONOMER"/>
<dbReference type="EvolutionaryTrace" id="O31797"/>
<dbReference type="Proteomes" id="UP000001570">
    <property type="component" value="Chromosome"/>
</dbReference>
<dbReference type="Gene3D" id="6.20.140.10">
    <property type="match status" value="1"/>
</dbReference>
<dbReference type="InterPro" id="IPR025448">
    <property type="entry name" value="YmzC-like"/>
</dbReference>
<dbReference type="Pfam" id="PF14157">
    <property type="entry name" value="YmzC"/>
    <property type="match status" value="1"/>
</dbReference>
<accession>O31797</accession>
<feature type="signal peptide" evidence="1">
    <location>
        <begin position="1"/>
        <end position="26"/>
    </location>
</feature>
<feature type="chain" id="PRO_0000013714" description="Uncharacterized protein YmzC">
    <location>
        <begin position="27"/>
        <end position="90"/>
    </location>
</feature>
<feature type="strand" evidence="2">
    <location>
        <begin position="49"/>
        <end position="52"/>
    </location>
</feature>
<feature type="strand" evidence="2">
    <location>
        <begin position="57"/>
        <end position="62"/>
    </location>
</feature>
<feature type="strand" evidence="2">
    <location>
        <begin position="65"/>
        <end position="72"/>
    </location>
</feature>
<feature type="turn" evidence="2">
    <location>
        <begin position="73"/>
        <end position="76"/>
    </location>
</feature>
<feature type="strand" evidence="2">
    <location>
        <begin position="77"/>
        <end position="85"/>
    </location>
</feature>
<organism>
    <name type="scientific">Bacillus subtilis (strain 168)</name>
    <dbReference type="NCBI Taxonomy" id="224308"/>
    <lineage>
        <taxon>Bacteria</taxon>
        <taxon>Bacillati</taxon>
        <taxon>Bacillota</taxon>
        <taxon>Bacilli</taxon>
        <taxon>Bacillales</taxon>
        <taxon>Bacillaceae</taxon>
        <taxon>Bacillus</taxon>
    </lineage>
</organism>
<protein>
    <recommendedName>
        <fullName>Uncharacterized protein YmzC</fullName>
    </recommendedName>
</protein>
<evidence type="ECO:0000255" key="1"/>
<evidence type="ECO:0007829" key="2">
    <source>
        <dbReference type="PDB" id="3KVP"/>
    </source>
</evidence>
<gene>
    <name type="primary">ymzC</name>
    <name type="ordered locus">BSU17350</name>
</gene>
<reference key="1">
    <citation type="journal article" date="1997" name="Nature">
        <title>The complete genome sequence of the Gram-positive bacterium Bacillus subtilis.</title>
        <authorList>
            <person name="Kunst F."/>
            <person name="Ogasawara N."/>
            <person name="Moszer I."/>
            <person name="Albertini A.M."/>
            <person name="Alloni G."/>
            <person name="Azevedo V."/>
            <person name="Bertero M.G."/>
            <person name="Bessieres P."/>
            <person name="Bolotin A."/>
            <person name="Borchert S."/>
            <person name="Borriss R."/>
            <person name="Boursier L."/>
            <person name="Brans A."/>
            <person name="Braun M."/>
            <person name="Brignell S.C."/>
            <person name="Bron S."/>
            <person name="Brouillet S."/>
            <person name="Bruschi C.V."/>
            <person name="Caldwell B."/>
            <person name="Capuano V."/>
            <person name="Carter N.M."/>
            <person name="Choi S.-K."/>
            <person name="Codani J.-J."/>
            <person name="Connerton I.F."/>
            <person name="Cummings N.J."/>
            <person name="Daniel R.A."/>
            <person name="Denizot F."/>
            <person name="Devine K.M."/>
            <person name="Duesterhoeft A."/>
            <person name="Ehrlich S.D."/>
            <person name="Emmerson P.T."/>
            <person name="Entian K.-D."/>
            <person name="Errington J."/>
            <person name="Fabret C."/>
            <person name="Ferrari E."/>
            <person name="Foulger D."/>
            <person name="Fritz C."/>
            <person name="Fujita M."/>
            <person name="Fujita Y."/>
            <person name="Fuma S."/>
            <person name="Galizzi A."/>
            <person name="Galleron N."/>
            <person name="Ghim S.-Y."/>
            <person name="Glaser P."/>
            <person name="Goffeau A."/>
            <person name="Golightly E.J."/>
            <person name="Grandi G."/>
            <person name="Guiseppi G."/>
            <person name="Guy B.J."/>
            <person name="Haga K."/>
            <person name="Haiech J."/>
            <person name="Harwood C.R."/>
            <person name="Henaut A."/>
            <person name="Hilbert H."/>
            <person name="Holsappel S."/>
            <person name="Hosono S."/>
            <person name="Hullo M.-F."/>
            <person name="Itaya M."/>
            <person name="Jones L.-M."/>
            <person name="Joris B."/>
            <person name="Karamata D."/>
            <person name="Kasahara Y."/>
            <person name="Klaerr-Blanchard M."/>
            <person name="Klein C."/>
            <person name="Kobayashi Y."/>
            <person name="Koetter P."/>
            <person name="Koningstein G."/>
            <person name="Krogh S."/>
            <person name="Kumano M."/>
            <person name="Kurita K."/>
            <person name="Lapidus A."/>
            <person name="Lardinois S."/>
            <person name="Lauber J."/>
            <person name="Lazarevic V."/>
            <person name="Lee S.-M."/>
            <person name="Levine A."/>
            <person name="Liu H."/>
            <person name="Masuda S."/>
            <person name="Mauel C."/>
            <person name="Medigue C."/>
            <person name="Medina N."/>
            <person name="Mellado R.P."/>
            <person name="Mizuno M."/>
            <person name="Moestl D."/>
            <person name="Nakai S."/>
            <person name="Noback M."/>
            <person name="Noone D."/>
            <person name="O'Reilly M."/>
            <person name="Ogawa K."/>
            <person name="Ogiwara A."/>
            <person name="Oudega B."/>
            <person name="Park S.-H."/>
            <person name="Parro V."/>
            <person name="Pohl T.M."/>
            <person name="Portetelle D."/>
            <person name="Porwollik S."/>
            <person name="Prescott A.M."/>
            <person name="Presecan E."/>
            <person name="Pujic P."/>
            <person name="Purnelle B."/>
            <person name="Rapoport G."/>
            <person name="Rey M."/>
            <person name="Reynolds S."/>
            <person name="Rieger M."/>
            <person name="Rivolta C."/>
            <person name="Rocha E."/>
            <person name="Roche B."/>
            <person name="Rose M."/>
            <person name="Sadaie Y."/>
            <person name="Sato T."/>
            <person name="Scanlan E."/>
            <person name="Schleich S."/>
            <person name="Schroeter R."/>
            <person name="Scoffone F."/>
            <person name="Sekiguchi J."/>
            <person name="Sekowska A."/>
            <person name="Seror S.J."/>
            <person name="Serror P."/>
            <person name="Shin B.-S."/>
            <person name="Soldo B."/>
            <person name="Sorokin A."/>
            <person name="Tacconi E."/>
            <person name="Takagi T."/>
            <person name="Takahashi H."/>
            <person name="Takemaru K."/>
            <person name="Takeuchi M."/>
            <person name="Tamakoshi A."/>
            <person name="Tanaka T."/>
            <person name="Terpstra P."/>
            <person name="Tognoni A."/>
            <person name="Tosato V."/>
            <person name="Uchiyama S."/>
            <person name="Vandenbol M."/>
            <person name="Vannier F."/>
            <person name="Vassarotti A."/>
            <person name="Viari A."/>
            <person name="Wambutt R."/>
            <person name="Wedler E."/>
            <person name="Wedler H."/>
            <person name="Weitzenegger T."/>
            <person name="Winters P."/>
            <person name="Wipat A."/>
            <person name="Yamamoto H."/>
            <person name="Yamane K."/>
            <person name="Yasumoto K."/>
            <person name="Yata K."/>
            <person name="Yoshida K."/>
            <person name="Yoshikawa H.-F."/>
            <person name="Zumstein E."/>
            <person name="Yoshikawa H."/>
            <person name="Danchin A."/>
        </authorList>
    </citation>
    <scope>NUCLEOTIDE SEQUENCE [LARGE SCALE GENOMIC DNA]</scope>
    <source>
        <strain>168</strain>
    </source>
</reference>